<feature type="chain" id="PRO_1000055599" description="Large ribosomal subunit protein uL14">
    <location>
        <begin position="1"/>
        <end position="122"/>
    </location>
</feature>
<protein>
    <recommendedName>
        <fullName evidence="1">Large ribosomal subunit protein uL14</fullName>
    </recommendedName>
    <alternativeName>
        <fullName evidence="2">50S ribosomal protein L14</fullName>
    </alternativeName>
</protein>
<dbReference type="EMBL" id="CP000269">
    <property type="protein sequence ID" value="ABR89940.1"/>
    <property type="molecule type" value="Genomic_DNA"/>
</dbReference>
<dbReference type="RefSeq" id="WP_012081241.1">
    <property type="nucleotide sequence ID" value="NC_009659.1"/>
</dbReference>
<dbReference type="SMR" id="A6T3J4"/>
<dbReference type="STRING" id="375286.mma_3401"/>
<dbReference type="KEGG" id="mms:mma_3401"/>
<dbReference type="eggNOG" id="COG0093">
    <property type="taxonomic scope" value="Bacteria"/>
</dbReference>
<dbReference type="HOGENOM" id="CLU_095071_2_1_4"/>
<dbReference type="OrthoDB" id="9806379at2"/>
<dbReference type="Proteomes" id="UP000006388">
    <property type="component" value="Chromosome"/>
</dbReference>
<dbReference type="GO" id="GO:0022625">
    <property type="term" value="C:cytosolic large ribosomal subunit"/>
    <property type="evidence" value="ECO:0007669"/>
    <property type="project" value="TreeGrafter"/>
</dbReference>
<dbReference type="GO" id="GO:0070180">
    <property type="term" value="F:large ribosomal subunit rRNA binding"/>
    <property type="evidence" value="ECO:0007669"/>
    <property type="project" value="TreeGrafter"/>
</dbReference>
<dbReference type="GO" id="GO:0003735">
    <property type="term" value="F:structural constituent of ribosome"/>
    <property type="evidence" value="ECO:0007669"/>
    <property type="project" value="InterPro"/>
</dbReference>
<dbReference type="GO" id="GO:0006412">
    <property type="term" value="P:translation"/>
    <property type="evidence" value="ECO:0007669"/>
    <property type="project" value="UniProtKB-UniRule"/>
</dbReference>
<dbReference type="CDD" id="cd00337">
    <property type="entry name" value="Ribosomal_uL14"/>
    <property type="match status" value="1"/>
</dbReference>
<dbReference type="FunFam" id="2.40.150.20:FF:000001">
    <property type="entry name" value="50S ribosomal protein L14"/>
    <property type="match status" value="1"/>
</dbReference>
<dbReference type="Gene3D" id="2.40.150.20">
    <property type="entry name" value="Ribosomal protein L14"/>
    <property type="match status" value="1"/>
</dbReference>
<dbReference type="HAMAP" id="MF_01367">
    <property type="entry name" value="Ribosomal_uL14"/>
    <property type="match status" value="1"/>
</dbReference>
<dbReference type="InterPro" id="IPR000218">
    <property type="entry name" value="Ribosomal_uL14"/>
</dbReference>
<dbReference type="InterPro" id="IPR005745">
    <property type="entry name" value="Ribosomal_uL14_bac-type"/>
</dbReference>
<dbReference type="InterPro" id="IPR019972">
    <property type="entry name" value="Ribosomal_uL14_CS"/>
</dbReference>
<dbReference type="InterPro" id="IPR036853">
    <property type="entry name" value="Ribosomal_uL14_sf"/>
</dbReference>
<dbReference type="NCBIfam" id="TIGR01067">
    <property type="entry name" value="rplN_bact"/>
    <property type="match status" value="1"/>
</dbReference>
<dbReference type="PANTHER" id="PTHR11761">
    <property type="entry name" value="50S/60S RIBOSOMAL PROTEIN L14/L23"/>
    <property type="match status" value="1"/>
</dbReference>
<dbReference type="PANTHER" id="PTHR11761:SF3">
    <property type="entry name" value="LARGE RIBOSOMAL SUBUNIT PROTEIN UL14M"/>
    <property type="match status" value="1"/>
</dbReference>
<dbReference type="Pfam" id="PF00238">
    <property type="entry name" value="Ribosomal_L14"/>
    <property type="match status" value="1"/>
</dbReference>
<dbReference type="SMART" id="SM01374">
    <property type="entry name" value="Ribosomal_L14"/>
    <property type="match status" value="1"/>
</dbReference>
<dbReference type="SUPFAM" id="SSF50193">
    <property type="entry name" value="Ribosomal protein L14"/>
    <property type="match status" value="1"/>
</dbReference>
<dbReference type="PROSITE" id="PS00049">
    <property type="entry name" value="RIBOSOMAL_L14"/>
    <property type="match status" value="1"/>
</dbReference>
<reference key="1">
    <citation type="journal article" date="2007" name="PLoS Genet.">
        <title>Genome analysis of Minibacterium massiliensis highlights the convergent evolution of water-living bacteria.</title>
        <authorList>
            <person name="Audic S."/>
            <person name="Robert C."/>
            <person name="Campagna B."/>
            <person name="Parinello H."/>
            <person name="Claverie J.-M."/>
            <person name="Raoult D."/>
            <person name="Drancourt M."/>
        </authorList>
    </citation>
    <scope>NUCLEOTIDE SEQUENCE [LARGE SCALE GENOMIC DNA]</scope>
    <source>
        <strain>Marseille</strain>
    </source>
</reference>
<keyword id="KW-0687">Ribonucleoprotein</keyword>
<keyword id="KW-0689">Ribosomal protein</keyword>
<keyword id="KW-0694">RNA-binding</keyword>
<keyword id="KW-0699">rRNA-binding</keyword>
<name>RL14_JANMA</name>
<accession>A6T3J4</accession>
<comment type="function">
    <text evidence="1">Binds to 23S rRNA. Forms part of two intersubunit bridges in the 70S ribosome.</text>
</comment>
<comment type="subunit">
    <text evidence="1">Part of the 50S ribosomal subunit. Forms a cluster with proteins L3 and L19. In the 70S ribosome, L14 and L19 interact and together make contacts with the 16S rRNA in bridges B5 and B8.</text>
</comment>
<comment type="similarity">
    <text evidence="1">Belongs to the universal ribosomal protein uL14 family.</text>
</comment>
<sequence length="122" mass="13321">MIQTESRLEVADNTGAREVMCIKVLGGSKRRYAGIGDVIKVTVKVAAPRGRVKKGEIYNAVVVRTAKGVRRQDGSLVKFDGNAAVLLNAKLEPIGTRIFGPVTRELRTERFMKIVSLAPEVL</sequence>
<organism>
    <name type="scientific">Janthinobacterium sp. (strain Marseille)</name>
    <name type="common">Minibacterium massiliensis</name>
    <dbReference type="NCBI Taxonomy" id="375286"/>
    <lineage>
        <taxon>Bacteria</taxon>
        <taxon>Pseudomonadati</taxon>
        <taxon>Pseudomonadota</taxon>
        <taxon>Betaproteobacteria</taxon>
        <taxon>Burkholderiales</taxon>
        <taxon>Oxalobacteraceae</taxon>
        <taxon>Janthinobacterium</taxon>
    </lineage>
</organism>
<gene>
    <name evidence="1" type="primary">rplN</name>
    <name type="ordered locus">mma_3401</name>
</gene>
<proteinExistence type="inferred from homology"/>
<evidence type="ECO:0000255" key="1">
    <source>
        <dbReference type="HAMAP-Rule" id="MF_01367"/>
    </source>
</evidence>
<evidence type="ECO:0000305" key="2"/>